<dbReference type="EC" id="2.7.4.3" evidence="1"/>
<dbReference type="EMBL" id="CP000576">
    <property type="protein sequence ID" value="ABO18353.1"/>
    <property type="molecule type" value="Genomic_DNA"/>
</dbReference>
<dbReference type="RefSeq" id="WP_011863645.1">
    <property type="nucleotide sequence ID" value="NC_009091.1"/>
</dbReference>
<dbReference type="SMR" id="A3PF28"/>
<dbReference type="STRING" id="167546.P9301_17301"/>
<dbReference type="KEGG" id="pmg:P9301_17301"/>
<dbReference type="eggNOG" id="COG0563">
    <property type="taxonomic scope" value="Bacteria"/>
</dbReference>
<dbReference type="HOGENOM" id="CLU_032354_4_1_3"/>
<dbReference type="OrthoDB" id="9805030at2"/>
<dbReference type="UniPathway" id="UPA00588">
    <property type="reaction ID" value="UER00649"/>
</dbReference>
<dbReference type="Proteomes" id="UP000001430">
    <property type="component" value="Chromosome"/>
</dbReference>
<dbReference type="GO" id="GO:0005737">
    <property type="term" value="C:cytoplasm"/>
    <property type="evidence" value="ECO:0007669"/>
    <property type="project" value="UniProtKB-SubCell"/>
</dbReference>
<dbReference type="GO" id="GO:0004017">
    <property type="term" value="F:adenylate kinase activity"/>
    <property type="evidence" value="ECO:0007669"/>
    <property type="project" value="UniProtKB-UniRule"/>
</dbReference>
<dbReference type="GO" id="GO:0005524">
    <property type="term" value="F:ATP binding"/>
    <property type="evidence" value="ECO:0007669"/>
    <property type="project" value="UniProtKB-UniRule"/>
</dbReference>
<dbReference type="GO" id="GO:0044209">
    <property type="term" value="P:AMP salvage"/>
    <property type="evidence" value="ECO:0007669"/>
    <property type="project" value="UniProtKB-UniRule"/>
</dbReference>
<dbReference type="CDD" id="cd01428">
    <property type="entry name" value="ADK"/>
    <property type="match status" value="1"/>
</dbReference>
<dbReference type="Gene3D" id="3.40.50.300">
    <property type="entry name" value="P-loop containing nucleotide triphosphate hydrolases"/>
    <property type="match status" value="1"/>
</dbReference>
<dbReference type="HAMAP" id="MF_00235">
    <property type="entry name" value="Adenylate_kinase_Adk"/>
    <property type="match status" value="1"/>
</dbReference>
<dbReference type="InterPro" id="IPR000850">
    <property type="entry name" value="Adenylat/UMP-CMP_kin"/>
</dbReference>
<dbReference type="InterPro" id="IPR033690">
    <property type="entry name" value="Adenylat_kinase_CS"/>
</dbReference>
<dbReference type="InterPro" id="IPR027417">
    <property type="entry name" value="P-loop_NTPase"/>
</dbReference>
<dbReference type="NCBIfam" id="NF001381">
    <property type="entry name" value="PRK00279.1-3"/>
    <property type="match status" value="1"/>
</dbReference>
<dbReference type="NCBIfam" id="NF011100">
    <property type="entry name" value="PRK14527.1"/>
    <property type="match status" value="1"/>
</dbReference>
<dbReference type="NCBIfam" id="NF011104">
    <property type="entry name" value="PRK14531.1"/>
    <property type="match status" value="1"/>
</dbReference>
<dbReference type="PANTHER" id="PTHR23359">
    <property type="entry name" value="NUCLEOTIDE KINASE"/>
    <property type="match status" value="1"/>
</dbReference>
<dbReference type="Pfam" id="PF00406">
    <property type="entry name" value="ADK"/>
    <property type="match status" value="1"/>
</dbReference>
<dbReference type="PRINTS" id="PR00094">
    <property type="entry name" value="ADENYLTKNASE"/>
</dbReference>
<dbReference type="SUPFAM" id="SSF52540">
    <property type="entry name" value="P-loop containing nucleoside triphosphate hydrolases"/>
    <property type="match status" value="1"/>
</dbReference>
<dbReference type="PROSITE" id="PS00113">
    <property type="entry name" value="ADENYLATE_KINASE"/>
    <property type="match status" value="1"/>
</dbReference>
<sequence length="182" mass="20841">MKKHILFLGAPGAGKGTQAELISQSNSYLHLSTGELLRKEIEMNTALGIQVKDIMNRGELVSDELVLKIVRQNLVKDNKGWILDGYPRNLSQANSLNEVLNEINQPLELVFYLDIPEEVLIKRLLLRGRKDDTEETIRTRVDIYKKTTEPLIQYFKDLSLIEYIDADRDLKTISSDIKQKMA</sequence>
<organism>
    <name type="scientific">Prochlorococcus marinus (strain MIT 9301)</name>
    <dbReference type="NCBI Taxonomy" id="167546"/>
    <lineage>
        <taxon>Bacteria</taxon>
        <taxon>Bacillati</taxon>
        <taxon>Cyanobacteriota</taxon>
        <taxon>Cyanophyceae</taxon>
        <taxon>Synechococcales</taxon>
        <taxon>Prochlorococcaceae</taxon>
        <taxon>Prochlorococcus</taxon>
    </lineage>
</organism>
<gene>
    <name evidence="1" type="primary">adk</name>
    <name type="ordered locus">P9301_17301</name>
</gene>
<evidence type="ECO:0000255" key="1">
    <source>
        <dbReference type="HAMAP-Rule" id="MF_00235"/>
    </source>
</evidence>
<protein>
    <recommendedName>
        <fullName evidence="1">Adenylate kinase</fullName>
        <shortName evidence="1">AK</shortName>
        <ecNumber evidence="1">2.7.4.3</ecNumber>
    </recommendedName>
    <alternativeName>
        <fullName evidence="1">ATP-AMP transphosphorylase</fullName>
    </alternativeName>
    <alternativeName>
        <fullName evidence="1">ATP:AMP phosphotransferase</fullName>
    </alternativeName>
    <alternativeName>
        <fullName evidence="1">Adenylate monophosphate kinase</fullName>
    </alternativeName>
</protein>
<keyword id="KW-0067">ATP-binding</keyword>
<keyword id="KW-0963">Cytoplasm</keyword>
<keyword id="KW-0418">Kinase</keyword>
<keyword id="KW-0545">Nucleotide biosynthesis</keyword>
<keyword id="KW-0547">Nucleotide-binding</keyword>
<keyword id="KW-1185">Reference proteome</keyword>
<keyword id="KW-0808">Transferase</keyword>
<reference key="1">
    <citation type="journal article" date="2007" name="PLoS Genet.">
        <title>Patterns and implications of gene gain and loss in the evolution of Prochlorococcus.</title>
        <authorList>
            <person name="Kettler G.C."/>
            <person name="Martiny A.C."/>
            <person name="Huang K."/>
            <person name="Zucker J."/>
            <person name="Coleman M.L."/>
            <person name="Rodrigue S."/>
            <person name="Chen F."/>
            <person name="Lapidus A."/>
            <person name="Ferriera S."/>
            <person name="Johnson J."/>
            <person name="Steglich C."/>
            <person name="Church G.M."/>
            <person name="Richardson P."/>
            <person name="Chisholm S.W."/>
        </authorList>
    </citation>
    <scope>NUCLEOTIDE SEQUENCE [LARGE SCALE GENOMIC DNA]</scope>
    <source>
        <strain>MIT 9301</strain>
    </source>
</reference>
<comment type="function">
    <text evidence="1">Catalyzes the reversible transfer of the terminal phosphate group between ATP and AMP. Plays an important role in cellular energy homeostasis and in adenine nucleotide metabolism.</text>
</comment>
<comment type="catalytic activity">
    <reaction evidence="1">
        <text>AMP + ATP = 2 ADP</text>
        <dbReference type="Rhea" id="RHEA:12973"/>
        <dbReference type="ChEBI" id="CHEBI:30616"/>
        <dbReference type="ChEBI" id="CHEBI:456215"/>
        <dbReference type="ChEBI" id="CHEBI:456216"/>
        <dbReference type="EC" id="2.7.4.3"/>
    </reaction>
</comment>
<comment type="pathway">
    <text evidence="1">Purine metabolism; AMP biosynthesis via salvage pathway; AMP from ADP: step 1/1.</text>
</comment>
<comment type="subunit">
    <text evidence="1">Monomer.</text>
</comment>
<comment type="subcellular location">
    <subcellularLocation>
        <location evidence="1">Cytoplasm</location>
    </subcellularLocation>
</comment>
<comment type="domain">
    <text evidence="1">Consists of three domains, a large central CORE domain and two small peripheral domains, NMPbind and LID, which undergo movements during catalysis. The LID domain closes over the site of phosphoryl transfer upon ATP binding. Assembling and dissambling the active center during each catalytic cycle provides an effective means to prevent ATP hydrolysis.</text>
</comment>
<comment type="similarity">
    <text evidence="1">Belongs to the adenylate kinase family.</text>
</comment>
<proteinExistence type="inferred from homology"/>
<feature type="chain" id="PRO_1000058872" description="Adenylate kinase">
    <location>
        <begin position="1"/>
        <end position="182"/>
    </location>
</feature>
<feature type="region of interest" description="NMP" evidence="1">
    <location>
        <begin position="32"/>
        <end position="61"/>
    </location>
</feature>
<feature type="region of interest" description="LID" evidence="1">
    <location>
        <begin position="126"/>
        <end position="132"/>
    </location>
</feature>
<feature type="binding site" evidence="1">
    <location>
        <begin position="12"/>
        <end position="17"/>
    </location>
    <ligand>
        <name>ATP</name>
        <dbReference type="ChEBI" id="CHEBI:30616"/>
    </ligand>
</feature>
<feature type="binding site" evidence="1">
    <location>
        <position position="33"/>
    </location>
    <ligand>
        <name>AMP</name>
        <dbReference type="ChEBI" id="CHEBI:456215"/>
    </ligand>
</feature>
<feature type="binding site" evidence="1">
    <location>
        <position position="38"/>
    </location>
    <ligand>
        <name>AMP</name>
        <dbReference type="ChEBI" id="CHEBI:456215"/>
    </ligand>
</feature>
<feature type="binding site" evidence="1">
    <location>
        <begin position="59"/>
        <end position="61"/>
    </location>
    <ligand>
        <name>AMP</name>
        <dbReference type="ChEBI" id="CHEBI:456215"/>
    </ligand>
</feature>
<feature type="binding site" evidence="1">
    <location>
        <begin position="85"/>
        <end position="88"/>
    </location>
    <ligand>
        <name>AMP</name>
        <dbReference type="ChEBI" id="CHEBI:456215"/>
    </ligand>
</feature>
<feature type="binding site" evidence="1">
    <location>
        <position position="92"/>
    </location>
    <ligand>
        <name>AMP</name>
        <dbReference type="ChEBI" id="CHEBI:456215"/>
    </ligand>
</feature>
<feature type="binding site" evidence="1">
    <location>
        <position position="127"/>
    </location>
    <ligand>
        <name>ATP</name>
        <dbReference type="ChEBI" id="CHEBI:30616"/>
    </ligand>
</feature>
<feature type="binding site" evidence="1">
    <location>
        <position position="129"/>
    </location>
    <ligand>
        <name>AMP</name>
        <dbReference type="ChEBI" id="CHEBI:456215"/>
    </ligand>
</feature>
<feature type="binding site" evidence="1">
    <location>
        <position position="140"/>
    </location>
    <ligand>
        <name>AMP</name>
        <dbReference type="ChEBI" id="CHEBI:456215"/>
    </ligand>
</feature>
<feature type="binding site" evidence="1">
    <location>
        <position position="168"/>
    </location>
    <ligand>
        <name>ATP</name>
        <dbReference type="ChEBI" id="CHEBI:30616"/>
    </ligand>
</feature>
<accession>A3PF28</accession>
<name>KAD_PROM0</name>